<organism>
    <name type="scientific">Arabidopsis thaliana</name>
    <name type="common">Mouse-ear cress</name>
    <dbReference type="NCBI Taxonomy" id="3702"/>
    <lineage>
        <taxon>Eukaryota</taxon>
        <taxon>Viridiplantae</taxon>
        <taxon>Streptophyta</taxon>
        <taxon>Embryophyta</taxon>
        <taxon>Tracheophyta</taxon>
        <taxon>Spermatophyta</taxon>
        <taxon>Magnoliopsida</taxon>
        <taxon>eudicotyledons</taxon>
        <taxon>Gunneridae</taxon>
        <taxon>Pentapetalae</taxon>
        <taxon>rosids</taxon>
        <taxon>malvids</taxon>
        <taxon>Brassicales</taxon>
        <taxon>Brassicaceae</taxon>
        <taxon>Camelineae</taxon>
        <taxon>Arabidopsis</taxon>
    </lineage>
</organism>
<reference key="1">
    <citation type="journal article" date="2000" name="Nature">
        <title>Sequence and analysis of chromosome 3 of the plant Arabidopsis thaliana.</title>
        <authorList>
            <person name="Salanoubat M."/>
            <person name="Lemcke K."/>
            <person name="Rieger M."/>
            <person name="Ansorge W."/>
            <person name="Unseld M."/>
            <person name="Fartmann B."/>
            <person name="Valle G."/>
            <person name="Bloecker H."/>
            <person name="Perez-Alonso M."/>
            <person name="Obermaier B."/>
            <person name="Delseny M."/>
            <person name="Boutry M."/>
            <person name="Grivell L.A."/>
            <person name="Mache R."/>
            <person name="Puigdomenech P."/>
            <person name="De Simone V."/>
            <person name="Choisne N."/>
            <person name="Artiguenave F."/>
            <person name="Robert C."/>
            <person name="Brottier P."/>
            <person name="Wincker P."/>
            <person name="Cattolico L."/>
            <person name="Weissenbach J."/>
            <person name="Saurin W."/>
            <person name="Quetier F."/>
            <person name="Schaefer M."/>
            <person name="Mueller-Auer S."/>
            <person name="Gabel C."/>
            <person name="Fuchs M."/>
            <person name="Benes V."/>
            <person name="Wurmbach E."/>
            <person name="Drzonek H."/>
            <person name="Erfle H."/>
            <person name="Jordan N."/>
            <person name="Bangert S."/>
            <person name="Wiedelmann R."/>
            <person name="Kranz H."/>
            <person name="Voss H."/>
            <person name="Holland R."/>
            <person name="Brandt P."/>
            <person name="Nyakatura G."/>
            <person name="Vezzi A."/>
            <person name="D'Angelo M."/>
            <person name="Pallavicini A."/>
            <person name="Toppo S."/>
            <person name="Simionati B."/>
            <person name="Conrad A."/>
            <person name="Hornischer K."/>
            <person name="Kauer G."/>
            <person name="Loehnert T.-H."/>
            <person name="Nordsiek G."/>
            <person name="Reichelt J."/>
            <person name="Scharfe M."/>
            <person name="Schoen O."/>
            <person name="Bargues M."/>
            <person name="Terol J."/>
            <person name="Climent J."/>
            <person name="Navarro P."/>
            <person name="Collado C."/>
            <person name="Perez-Perez A."/>
            <person name="Ottenwaelder B."/>
            <person name="Duchemin D."/>
            <person name="Cooke R."/>
            <person name="Laudie M."/>
            <person name="Berger-Llauro C."/>
            <person name="Purnelle B."/>
            <person name="Masuy D."/>
            <person name="de Haan M."/>
            <person name="Maarse A.C."/>
            <person name="Alcaraz J.-P."/>
            <person name="Cottet A."/>
            <person name="Casacuberta E."/>
            <person name="Monfort A."/>
            <person name="Argiriou A."/>
            <person name="Flores M."/>
            <person name="Liguori R."/>
            <person name="Vitale D."/>
            <person name="Mannhaupt G."/>
            <person name="Haase D."/>
            <person name="Schoof H."/>
            <person name="Rudd S."/>
            <person name="Zaccaria P."/>
            <person name="Mewes H.-W."/>
            <person name="Mayer K.F.X."/>
            <person name="Kaul S."/>
            <person name="Town C.D."/>
            <person name="Koo H.L."/>
            <person name="Tallon L.J."/>
            <person name="Jenkins J."/>
            <person name="Rooney T."/>
            <person name="Rizzo M."/>
            <person name="Walts A."/>
            <person name="Utterback T."/>
            <person name="Fujii C.Y."/>
            <person name="Shea T.P."/>
            <person name="Creasy T.H."/>
            <person name="Haas B."/>
            <person name="Maiti R."/>
            <person name="Wu D."/>
            <person name="Peterson J."/>
            <person name="Van Aken S."/>
            <person name="Pai G."/>
            <person name="Militscher J."/>
            <person name="Sellers P."/>
            <person name="Gill J.E."/>
            <person name="Feldblyum T.V."/>
            <person name="Preuss D."/>
            <person name="Lin X."/>
            <person name="Nierman W.C."/>
            <person name="Salzberg S.L."/>
            <person name="White O."/>
            <person name="Venter J.C."/>
            <person name="Fraser C.M."/>
            <person name="Kaneko T."/>
            <person name="Nakamura Y."/>
            <person name="Sato S."/>
            <person name="Kato T."/>
            <person name="Asamizu E."/>
            <person name="Sasamoto S."/>
            <person name="Kimura T."/>
            <person name="Idesawa K."/>
            <person name="Kawashima K."/>
            <person name="Kishida Y."/>
            <person name="Kiyokawa C."/>
            <person name="Kohara M."/>
            <person name="Matsumoto M."/>
            <person name="Matsuno A."/>
            <person name="Muraki A."/>
            <person name="Nakayama S."/>
            <person name="Nakazaki N."/>
            <person name="Shinpo S."/>
            <person name="Takeuchi C."/>
            <person name="Wada T."/>
            <person name="Watanabe A."/>
            <person name="Yamada M."/>
            <person name="Yasuda M."/>
            <person name="Tabata S."/>
        </authorList>
    </citation>
    <scope>NUCLEOTIDE SEQUENCE [LARGE SCALE GENOMIC DNA]</scope>
    <source>
        <strain>cv. Columbia</strain>
    </source>
</reference>
<reference key="2">
    <citation type="journal article" date="2017" name="Plant J.">
        <title>Araport11: a complete reannotation of the Arabidopsis thaliana reference genome.</title>
        <authorList>
            <person name="Cheng C.Y."/>
            <person name="Krishnakumar V."/>
            <person name="Chan A.P."/>
            <person name="Thibaud-Nissen F."/>
            <person name="Schobel S."/>
            <person name="Town C.D."/>
        </authorList>
    </citation>
    <scope>GENOME REANNOTATION</scope>
    <source>
        <strain>cv. Columbia</strain>
    </source>
</reference>
<reference key="3">
    <citation type="submission" date="2005-03" db="EMBL/GenBank/DDBJ databases">
        <title>Large-scale analysis of RIKEN Arabidopsis full-length (RAFL) cDNAs.</title>
        <authorList>
            <person name="Totoki Y."/>
            <person name="Seki M."/>
            <person name="Ishida J."/>
            <person name="Nakajima M."/>
            <person name="Enju A."/>
            <person name="Kamiya A."/>
            <person name="Narusaka M."/>
            <person name="Shin-i T."/>
            <person name="Nakagawa M."/>
            <person name="Sakamoto N."/>
            <person name="Oishi K."/>
            <person name="Kohara Y."/>
            <person name="Kobayashi M."/>
            <person name="Toyoda A."/>
            <person name="Sakaki Y."/>
            <person name="Sakurai T."/>
            <person name="Iida K."/>
            <person name="Akiyama K."/>
            <person name="Satou M."/>
            <person name="Toyoda T."/>
            <person name="Konagaya A."/>
            <person name="Carninci P."/>
            <person name="Kawai J."/>
            <person name="Hayashizaki Y."/>
            <person name="Shinozaki K."/>
        </authorList>
    </citation>
    <scope>NUCLEOTIDE SEQUENCE [LARGE SCALE MRNA]</scope>
    <source>
        <strain>cv. Columbia</strain>
    </source>
</reference>
<reference key="4">
    <citation type="submission" date="2006-11" db="EMBL/GenBank/DDBJ databases">
        <title>Arabidopsis ORF Clones.</title>
        <authorList>
            <person name="Bautista V.R."/>
            <person name="Kim C.J."/>
            <person name="Chen H."/>
            <person name="Quinitio C."/>
            <person name="Ecker J.R."/>
        </authorList>
    </citation>
    <scope>NUCLEOTIDE SEQUENCE [LARGE SCALE MRNA]</scope>
    <source>
        <strain>cv. Columbia</strain>
    </source>
</reference>
<reference key="5">
    <citation type="journal article" date="2005" name="Plant J.">
        <title>Requirement of aminoacyl-tRNA synthetases for gametogenesis and embryo development in Arabidopsis.</title>
        <authorList>
            <person name="Berg M."/>
            <person name="Rogers R."/>
            <person name="Muralla R."/>
            <person name="Meinke D."/>
        </authorList>
    </citation>
    <scope>DISRUPTION PHENOTYPE</scope>
</reference>
<reference key="6">
    <citation type="journal article" date="2005" name="Proc. Natl. Acad. Sci. U.S.A.">
        <title>Dual targeting is the rule for organellar aminoacyl-tRNA synthetases in Arabidopsis thaliana.</title>
        <authorList>
            <person name="Duchene A.-M."/>
            <person name="Giritch A."/>
            <person name="Hoffmann B."/>
            <person name="Cognat V."/>
            <person name="Lancelin D."/>
            <person name="Peeters N.M."/>
            <person name="Zaepfel M."/>
            <person name="Marechal-Drouard L."/>
            <person name="Small I.D."/>
        </authorList>
    </citation>
    <scope>SUBCELLULAR LOCATION</scope>
</reference>
<reference key="7">
    <citation type="journal article" date="2012" name="Mol. Biol. Rep.">
        <title>EMBRYONIC FACTOR 31 encodes a tyrosyl-tRNA synthetase that is essential for seed development.</title>
        <authorList>
            <person name="Jiang L."/>
            <person name="Wang S."/>
            <person name="Li H."/>
            <person name="Zhang G."/>
            <person name="Li H."/>
        </authorList>
    </citation>
    <scope>DISRUPTION PHENOTYPE</scope>
</reference>
<accession>Q9M876</accession>
<protein>
    <recommendedName>
        <fullName evidence="9">Tyrosine--tRNA ligase, chloroplastic/mitochondrial</fullName>
        <ecNumber evidence="3">6.1.1.1</ecNumber>
    </recommendedName>
    <alternativeName>
        <fullName evidence="7">Protein EMBRYO DEFECTIVE 2768</fullName>
    </alternativeName>
    <alternativeName>
        <fullName evidence="8">Protein EMBRYONIC FACTOR 31</fullName>
    </alternativeName>
    <alternativeName>
        <fullName evidence="9">Tyrosyl-tRNA synthetase</fullName>
        <shortName evidence="9">TyrRS</shortName>
    </alternativeName>
</protein>
<evidence type="ECO:0000250" key="1"/>
<evidence type="ECO:0000250" key="2">
    <source>
        <dbReference type="UniProtKB" id="P54577"/>
    </source>
</evidence>
<evidence type="ECO:0000250" key="3">
    <source>
        <dbReference type="UniProtKB" id="Q9Y2Z4"/>
    </source>
</evidence>
<evidence type="ECO:0000255" key="4">
    <source>
        <dbReference type="PROSITE-ProRule" id="PRU00182"/>
    </source>
</evidence>
<evidence type="ECO:0000269" key="5">
    <source>
    </source>
</evidence>
<evidence type="ECO:0000269" key="6">
    <source>
    </source>
</evidence>
<evidence type="ECO:0000303" key="7">
    <source>
    </source>
</evidence>
<evidence type="ECO:0000303" key="8">
    <source>
    </source>
</evidence>
<evidence type="ECO:0000305" key="9"/>
<evidence type="ECO:0000305" key="10">
    <source>
    </source>
</evidence>
<evidence type="ECO:0000312" key="11">
    <source>
        <dbReference type="Araport" id="AT3G02660"/>
    </source>
</evidence>
<evidence type="ECO:0000312" key="12">
    <source>
        <dbReference type="EMBL" id="AAF32473.1"/>
    </source>
</evidence>
<keyword id="KW-0030">Aminoacyl-tRNA synthetase</keyword>
<keyword id="KW-0067">ATP-binding</keyword>
<keyword id="KW-0150">Chloroplast</keyword>
<keyword id="KW-0436">Ligase</keyword>
<keyword id="KW-0496">Mitochondrion</keyword>
<keyword id="KW-0547">Nucleotide-binding</keyword>
<keyword id="KW-0934">Plastid</keyword>
<keyword id="KW-0648">Protein biosynthesis</keyword>
<keyword id="KW-1185">Reference proteome</keyword>
<keyword id="KW-0694">RNA-binding</keyword>
<keyword id="KW-0809">Transit peptide</keyword>
<comment type="function">
    <text evidence="3">Catalyzes the attachment of tyrosine to tRNA(Tyr) in a two-step reaction: tyrosine is first activated by ATP to form Tyr-AMP and then transferred to the acceptor end of tRNA(Tyr).</text>
</comment>
<comment type="catalytic activity">
    <reaction evidence="3">
        <text>tRNA(Tyr) + L-tyrosine + ATP = L-tyrosyl-tRNA(Tyr) + AMP + diphosphate + H(+)</text>
        <dbReference type="Rhea" id="RHEA:10220"/>
        <dbReference type="Rhea" id="RHEA-COMP:9706"/>
        <dbReference type="Rhea" id="RHEA-COMP:9707"/>
        <dbReference type="ChEBI" id="CHEBI:15378"/>
        <dbReference type="ChEBI" id="CHEBI:30616"/>
        <dbReference type="ChEBI" id="CHEBI:33019"/>
        <dbReference type="ChEBI" id="CHEBI:58315"/>
        <dbReference type="ChEBI" id="CHEBI:78442"/>
        <dbReference type="ChEBI" id="CHEBI:78536"/>
        <dbReference type="ChEBI" id="CHEBI:456215"/>
        <dbReference type="EC" id="6.1.1.1"/>
    </reaction>
</comment>
<comment type="subcellular location">
    <subcellularLocation>
        <location evidence="5">Plastid</location>
        <location evidence="5">Chloroplast</location>
    </subcellularLocation>
    <subcellularLocation>
        <location evidence="5">Mitochondrion</location>
    </subcellularLocation>
</comment>
<comment type="disruption phenotype">
    <text evidence="6 10">Embryo defective. Developmental arrest of the embryo at the preglobular stage.</text>
</comment>
<comment type="similarity">
    <text evidence="9">Belongs to the class-I aminoacyl-tRNA synthetase family.</text>
</comment>
<gene>
    <name evidence="7" type="primary">EMB2768</name>
    <name evidence="8" type="synonym">FAC31</name>
    <name evidence="11" type="ordered locus">At3g02660</name>
    <name evidence="12" type="ORF">F16B3.29</name>
</gene>
<proteinExistence type="evidence at transcript level"/>
<sequence>MAYATGITFASRSILPICSRTFLSPLRVASLLVFPEKSSATFFRRVQVPHLFSTSTTTLFSSVKCSIHSTSSPETENQAVFRPNVVDILEERGLLESITSENLRSACSDPKVAPLRVYCGFDPTAESLHLGNLLGIIVLSWFQRCGHQAVGLIGGATGRVGDPSGKSLERPELDADTLEKNIAGITKIIIKILGSNPSPGGSYVIFNNYDWWKDMTMLDFLNKVGRFARVGTMMAKESVKKRLESEQGMSYTEFTYQLLQAYDFLHLFKNEGINVQIGGSDQWGNITAGTDLIRKILQAEEAAYGLTFPLLLKNDGTKFGKSEDGAIWLSPSMLSPYKFYQYFFSVPDVDVIRFLKTLTFLSLDEIKILEDQMSKPGYVPNTAQIKLAEEVTRFVHGEEGLKEAIKATEALRPGAETKLDWNLIERIAEDIPSCSLPIDRVSGLSIVDLSVSAGLFESKSAARRMLKQGGFYMNNERVDDENKRVDEEDIVEGRGLVLSAGKKNKVVVRIS</sequence>
<dbReference type="EC" id="6.1.1.1" evidence="3"/>
<dbReference type="EMBL" id="AC021640">
    <property type="protein sequence ID" value="AAF32473.1"/>
    <property type="molecule type" value="Genomic_DNA"/>
</dbReference>
<dbReference type="EMBL" id="CP002686">
    <property type="protein sequence ID" value="AEE73845.1"/>
    <property type="molecule type" value="Genomic_DNA"/>
</dbReference>
<dbReference type="EMBL" id="CP002686">
    <property type="protein sequence ID" value="ANM63412.1"/>
    <property type="molecule type" value="Genomic_DNA"/>
</dbReference>
<dbReference type="EMBL" id="AK221609">
    <property type="protein sequence ID" value="BAD95182.1"/>
    <property type="molecule type" value="mRNA"/>
</dbReference>
<dbReference type="EMBL" id="BT029296">
    <property type="protein sequence ID" value="ABK32110.1"/>
    <property type="molecule type" value="mRNA"/>
</dbReference>
<dbReference type="RefSeq" id="NP_001325501.1">
    <property type="nucleotide sequence ID" value="NM_001337429.1"/>
</dbReference>
<dbReference type="RefSeq" id="NP_186915.1">
    <property type="nucleotide sequence ID" value="NM_111134.5"/>
</dbReference>
<dbReference type="SMR" id="Q9M876"/>
<dbReference type="FunCoup" id="Q9M876">
    <property type="interactions" value="3687"/>
</dbReference>
<dbReference type="STRING" id="3702.Q9M876"/>
<dbReference type="PaxDb" id="3702-AT3G02660.1"/>
<dbReference type="ProteomicsDB" id="245302"/>
<dbReference type="EnsemblPlants" id="AT3G02660.1">
    <property type="protein sequence ID" value="AT3G02660.1"/>
    <property type="gene ID" value="AT3G02660"/>
</dbReference>
<dbReference type="EnsemblPlants" id="AT3G02660.2">
    <property type="protein sequence ID" value="AT3G02660.2"/>
    <property type="gene ID" value="AT3G02660"/>
</dbReference>
<dbReference type="GeneID" id="821282"/>
<dbReference type="Gramene" id="AT3G02660.1">
    <property type="protein sequence ID" value="AT3G02660.1"/>
    <property type="gene ID" value="AT3G02660"/>
</dbReference>
<dbReference type="Gramene" id="AT3G02660.2">
    <property type="protein sequence ID" value="AT3G02660.2"/>
    <property type="gene ID" value="AT3G02660"/>
</dbReference>
<dbReference type="KEGG" id="ath:AT3G02660"/>
<dbReference type="Araport" id="AT3G02660"/>
<dbReference type="TAIR" id="AT3G02660">
    <property type="gene designation" value="EMB2768"/>
</dbReference>
<dbReference type="eggNOG" id="KOG2623">
    <property type="taxonomic scope" value="Eukaryota"/>
</dbReference>
<dbReference type="HOGENOM" id="CLU_024003_0_0_1"/>
<dbReference type="InParanoid" id="Q9M876"/>
<dbReference type="OMA" id="YMMAKDS"/>
<dbReference type="PhylomeDB" id="Q9M876"/>
<dbReference type="PRO" id="PR:Q9M876"/>
<dbReference type="Proteomes" id="UP000006548">
    <property type="component" value="Chromosome 3"/>
</dbReference>
<dbReference type="ExpressionAtlas" id="Q9M876">
    <property type="expression patterns" value="baseline and differential"/>
</dbReference>
<dbReference type="GO" id="GO:0009507">
    <property type="term" value="C:chloroplast"/>
    <property type="evidence" value="ECO:0000314"/>
    <property type="project" value="TAIR"/>
</dbReference>
<dbReference type="GO" id="GO:0009570">
    <property type="term" value="C:chloroplast stroma"/>
    <property type="evidence" value="ECO:0007005"/>
    <property type="project" value="TAIR"/>
</dbReference>
<dbReference type="GO" id="GO:0005739">
    <property type="term" value="C:mitochondrion"/>
    <property type="evidence" value="ECO:0000314"/>
    <property type="project" value="TAIR"/>
</dbReference>
<dbReference type="GO" id="GO:0005524">
    <property type="term" value="F:ATP binding"/>
    <property type="evidence" value="ECO:0007669"/>
    <property type="project" value="UniProtKB-KW"/>
</dbReference>
<dbReference type="GO" id="GO:0003723">
    <property type="term" value="F:RNA binding"/>
    <property type="evidence" value="ECO:0007669"/>
    <property type="project" value="UniProtKB-KW"/>
</dbReference>
<dbReference type="GO" id="GO:0004831">
    <property type="term" value="F:tyrosine-tRNA ligase activity"/>
    <property type="evidence" value="ECO:0007669"/>
    <property type="project" value="UniProtKB-EC"/>
</dbReference>
<dbReference type="GO" id="GO:0009793">
    <property type="term" value="P:embryo development ending in seed dormancy"/>
    <property type="evidence" value="ECO:0000315"/>
    <property type="project" value="TAIR"/>
</dbReference>
<dbReference type="GO" id="GO:0006437">
    <property type="term" value="P:tyrosyl-tRNA aminoacylation"/>
    <property type="evidence" value="ECO:0007669"/>
    <property type="project" value="InterPro"/>
</dbReference>
<dbReference type="CDD" id="cd00165">
    <property type="entry name" value="S4"/>
    <property type="match status" value="1"/>
</dbReference>
<dbReference type="CDD" id="cd00805">
    <property type="entry name" value="TyrRS_core"/>
    <property type="match status" value="1"/>
</dbReference>
<dbReference type="FunFam" id="1.10.240.10:FF:000001">
    <property type="entry name" value="Tyrosine--tRNA ligase"/>
    <property type="match status" value="1"/>
</dbReference>
<dbReference type="FunFam" id="3.10.290.10:FF:000014">
    <property type="entry name" value="Tyrosine--tRNA ligase"/>
    <property type="match status" value="1"/>
</dbReference>
<dbReference type="FunFam" id="3.40.50.620:FF:000158">
    <property type="entry name" value="Tyrosine--tRNA ligase"/>
    <property type="match status" value="1"/>
</dbReference>
<dbReference type="Gene3D" id="3.40.50.620">
    <property type="entry name" value="HUPs"/>
    <property type="match status" value="1"/>
</dbReference>
<dbReference type="Gene3D" id="3.10.290.10">
    <property type="entry name" value="RNA-binding S4 domain"/>
    <property type="match status" value="1"/>
</dbReference>
<dbReference type="Gene3D" id="1.10.240.10">
    <property type="entry name" value="Tyrosyl-Transfer RNA Synthetase"/>
    <property type="match status" value="1"/>
</dbReference>
<dbReference type="HAMAP" id="MF_02006">
    <property type="entry name" value="Tyr_tRNA_synth_type1"/>
    <property type="match status" value="1"/>
</dbReference>
<dbReference type="InterPro" id="IPR001412">
    <property type="entry name" value="aa-tRNA-synth_I_CS"/>
</dbReference>
<dbReference type="InterPro" id="IPR002305">
    <property type="entry name" value="aa-tRNA-synth_Ic"/>
</dbReference>
<dbReference type="InterPro" id="IPR014729">
    <property type="entry name" value="Rossmann-like_a/b/a_fold"/>
</dbReference>
<dbReference type="InterPro" id="IPR002942">
    <property type="entry name" value="S4_RNA-bd"/>
</dbReference>
<dbReference type="InterPro" id="IPR036986">
    <property type="entry name" value="S4_RNA-bd_sf"/>
</dbReference>
<dbReference type="InterPro" id="IPR054608">
    <property type="entry name" value="SYY-like_C"/>
</dbReference>
<dbReference type="InterPro" id="IPR002307">
    <property type="entry name" value="Tyr-tRNA-ligase"/>
</dbReference>
<dbReference type="InterPro" id="IPR024088">
    <property type="entry name" value="Tyr-tRNA-ligase_bac-type"/>
</dbReference>
<dbReference type="InterPro" id="IPR024107">
    <property type="entry name" value="Tyr-tRNA-ligase_bac_1"/>
</dbReference>
<dbReference type="NCBIfam" id="TIGR00234">
    <property type="entry name" value="tyrS"/>
    <property type="match status" value="1"/>
</dbReference>
<dbReference type="PANTHER" id="PTHR11766:SF0">
    <property type="entry name" value="TYROSINE--TRNA LIGASE, MITOCHONDRIAL"/>
    <property type="match status" value="1"/>
</dbReference>
<dbReference type="PANTHER" id="PTHR11766">
    <property type="entry name" value="TYROSYL-TRNA SYNTHETASE"/>
    <property type="match status" value="1"/>
</dbReference>
<dbReference type="Pfam" id="PF22421">
    <property type="entry name" value="SYY_C-terminal"/>
    <property type="match status" value="1"/>
</dbReference>
<dbReference type="Pfam" id="PF00579">
    <property type="entry name" value="tRNA-synt_1b"/>
    <property type="match status" value="1"/>
</dbReference>
<dbReference type="PRINTS" id="PR01040">
    <property type="entry name" value="TRNASYNTHTYR"/>
</dbReference>
<dbReference type="SMART" id="SM00363">
    <property type="entry name" value="S4"/>
    <property type="match status" value="1"/>
</dbReference>
<dbReference type="SUPFAM" id="SSF55174">
    <property type="entry name" value="Alpha-L RNA-binding motif"/>
    <property type="match status" value="1"/>
</dbReference>
<dbReference type="SUPFAM" id="SSF52374">
    <property type="entry name" value="Nucleotidylyl transferase"/>
    <property type="match status" value="1"/>
</dbReference>
<dbReference type="PROSITE" id="PS00178">
    <property type="entry name" value="AA_TRNA_LIGASE_I"/>
    <property type="match status" value="1"/>
</dbReference>
<dbReference type="PROSITE" id="PS50889">
    <property type="entry name" value="S4"/>
    <property type="match status" value="1"/>
</dbReference>
<feature type="chain" id="PRO_0000433555" description="Tyrosine--tRNA ligase, chloroplastic/mitochondrial" evidence="9">
    <location>
        <begin position="1"/>
        <end position="511"/>
    </location>
</feature>
<feature type="transit peptide" description="Chloroplast and mitochondrion" evidence="9">
    <location>
        <begin position="1"/>
        <end status="unknown"/>
    </location>
</feature>
<feature type="domain" description="S4 RNA-binding" evidence="4">
    <location>
        <begin position="444"/>
        <end position="510"/>
    </location>
</feature>
<feature type="short sequence motif" description="'HIGH' region" evidence="9">
    <location>
        <begin position="123"/>
        <end position="132"/>
    </location>
</feature>
<feature type="short sequence motif" description="'KMSKS' region" evidence="9">
    <location>
        <begin position="318"/>
        <end position="322"/>
    </location>
</feature>
<feature type="binding site" evidence="2">
    <location>
        <position position="118"/>
    </location>
    <ligand>
        <name>L-tyrosine</name>
        <dbReference type="ChEBI" id="CHEBI:58315"/>
    </ligand>
</feature>
<feature type="binding site" evidence="3">
    <location>
        <position position="122"/>
    </location>
    <ligand>
        <name>ATP</name>
        <dbReference type="ChEBI" id="CHEBI:30616"/>
    </ligand>
</feature>
<feature type="binding site" evidence="3">
    <location>
        <position position="162"/>
    </location>
    <ligand>
        <name>L-tyrosine</name>
        <dbReference type="ChEBI" id="CHEBI:58315"/>
    </ligand>
</feature>
<feature type="binding site" evidence="2">
    <location>
        <position position="256"/>
    </location>
    <ligand>
        <name>L-tyrosine</name>
        <dbReference type="ChEBI" id="CHEBI:58315"/>
    </ligand>
</feature>
<feature type="binding site" evidence="2">
    <location>
        <position position="260"/>
    </location>
    <ligand>
        <name>L-tyrosine</name>
        <dbReference type="ChEBI" id="CHEBI:58315"/>
    </ligand>
</feature>
<feature type="binding site" evidence="2">
    <location>
        <position position="263"/>
    </location>
    <ligand>
        <name>L-tyrosine</name>
        <dbReference type="ChEBI" id="CHEBI:58315"/>
    </ligand>
</feature>
<feature type="binding site" evidence="2">
    <location>
        <position position="282"/>
    </location>
    <ligand>
        <name>L-tyrosine</name>
        <dbReference type="ChEBI" id="CHEBI:58315"/>
    </ligand>
</feature>
<feature type="binding site" evidence="1">
    <location>
        <position position="321"/>
    </location>
    <ligand>
        <name>ATP</name>
        <dbReference type="ChEBI" id="CHEBI:30616"/>
    </ligand>
</feature>
<name>SYYM_ARATH</name>